<accession>Q5HM39</accession>
<organism>
    <name type="scientific">Staphylococcus epidermidis (strain ATCC 35984 / DSM 28319 / BCRC 17069 / CCUG 31568 / BM 3577 / RP62A)</name>
    <dbReference type="NCBI Taxonomy" id="176279"/>
    <lineage>
        <taxon>Bacteria</taxon>
        <taxon>Bacillati</taxon>
        <taxon>Bacillota</taxon>
        <taxon>Bacilli</taxon>
        <taxon>Bacillales</taxon>
        <taxon>Staphylococcaceae</taxon>
        <taxon>Staphylococcus</taxon>
    </lineage>
</organism>
<sequence length="104" mass="11588">MNRDEVQLLGFEIVAYAGDARSKLLEALNAAKDSEFDKAEQLVEEANECIANAHKAQTNLLAQEAKGEDIAYSITMIHGQDHLMTTLLLKDLMKHLIELYKKGS</sequence>
<comment type="function">
    <text evidence="1">The phosphoenolpyruvate-dependent sugar phosphotransferase system (sugar PTS), a major carbohydrate active transport system, catalyzes the phosphorylation of incoming sugar substrates concomitantly with their translocation across the cell membrane. The enzyme II LacEF PTS system is involved in lactose transport.</text>
</comment>
<comment type="cofactor">
    <cofactor evidence="2">
        <name>Mg(2+)</name>
        <dbReference type="ChEBI" id="CHEBI:18420"/>
    </cofactor>
    <text evidence="2">Binds 1 Mg(2+) ion per trimer.</text>
</comment>
<comment type="subunit">
    <text evidence="1">Homotrimer.</text>
</comment>
<comment type="subcellular location">
    <subcellularLocation>
        <location evidence="4">Cytoplasm</location>
    </subcellularLocation>
</comment>
<comment type="induction">
    <text evidence="1">Induced by lactose, galactose and galactose-6-P. Repressed by glucose.</text>
</comment>
<comment type="domain">
    <text evidence="3">The PTS EIIA type-3 domain is phosphorylated by phospho-HPr on a histidyl residue. Then, it transfers the phosphoryl group to the PTS EIIB type-3 domain.</text>
</comment>
<dbReference type="EMBL" id="CP000029">
    <property type="protein sequence ID" value="AAW55167.1"/>
    <property type="molecule type" value="Genomic_DNA"/>
</dbReference>
<dbReference type="RefSeq" id="WP_001829758.1">
    <property type="nucleotide sequence ID" value="NC_002976.3"/>
</dbReference>
<dbReference type="SMR" id="Q5HM39"/>
<dbReference type="STRING" id="176279.SERP1791"/>
<dbReference type="KEGG" id="ser:SERP1791"/>
<dbReference type="eggNOG" id="COG1447">
    <property type="taxonomic scope" value="Bacteria"/>
</dbReference>
<dbReference type="HOGENOM" id="CLU_152490_1_0_9"/>
<dbReference type="Proteomes" id="UP000000531">
    <property type="component" value="Chromosome"/>
</dbReference>
<dbReference type="GO" id="GO:0005737">
    <property type="term" value="C:cytoplasm"/>
    <property type="evidence" value="ECO:0007669"/>
    <property type="project" value="UniProtKB-SubCell"/>
</dbReference>
<dbReference type="GO" id="GO:0046872">
    <property type="term" value="F:metal ion binding"/>
    <property type="evidence" value="ECO:0007669"/>
    <property type="project" value="UniProtKB-KW"/>
</dbReference>
<dbReference type="GO" id="GO:0016740">
    <property type="term" value="F:transferase activity"/>
    <property type="evidence" value="ECO:0007669"/>
    <property type="project" value="UniProtKB-KW"/>
</dbReference>
<dbReference type="GO" id="GO:0009401">
    <property type="term" value="P:phosphoenolpyruvate-dependent sugar phosphotransferase system"/>
    <property type="evidence" value="ECO:0007669"/>
    <property type="project" value="UniProtKB-KW"/>
</dbReference>
<dbReference type="CDD" id="cd00215">
    <property type="entry name" value="PTS_IIA_lac"/>
    <property type="match status" value="1"/>
</dbReference>
<dbReference type="Gene3D" id="1.20.58.80">
    <property type="entry name" value="Phosphotransferase system, lactose/cellobiose-type IIA subunit"/>
    <property type="match status" value="1"/>
</dbReference>
<dbReference type="InterPro" id="IPR003188">
    <property type="entry name" value="PTS_IIA_lac/cel"/>
</dbReference>
<dbReference type="InterPro" id="IPR036542">
    <property type="entry name" value="PTS_IIA_lac/cel_sf"/>
</dbReference>
<dbReference type="NCBIfam" id="TIGR00823">
    <property type="entry name" value="EIIA-LAC"/>
    <property type="match status" value="1"/>
</dbReference>
<dbReference type="PANTHER" id="PTHR34382:SF9">
    <property type="entry name" value="PHOSPHOTRANSFERASE SYSTEM SUGAR-SPECIFIC EII COMPONENT"/>
    <property type="match status" value="1"/>
</dbReference>
<dbReference type="PANTHER" id="PTHR34382">
    <property type="entry name" value="PTS SYSTEM N,N'-DIACETYLCHITOBIOSE-SPECIFIC EIIA COMPONENT"/>
    <property type="match status" value="1"/>
</dbReference>
<dbReference type="Pfam" id="PF02255">
    <property type="entry name" value="PTS_IIA"/>
    <property type="match status" value="1"/>
</dbReference>
<dbReference type="PIRSF" id="PIRSF000699">
    <property type="entry name" value="PTS_IILac_III"/>
    <property type="match status" value="1"/>
</dbReference>
<dbReference type="SUPFAM" id="SSF46973">
    <property type="entry name" value="Enzyme IIa from lactose specific PTS, IIa-lac"/>
    <property type="match status" value="1"/>
</dbReference>
<dbReference type="PROSITE" id="PS51095">
    <property type="entry name" value="PTS_EIIA_TYPE_3"/>
    <property type="match status" value="1"/>
</dbReference>
<proteinExistence type="inferred from homology"/>
<reference key="1">
    <citation type="journal article" date="2005" name="J. Bacteriol.">
        <title>Insights on evolution of virulence and resistance from the complete genome analysis of an early methicillin-resistant Staphylococcus aureus strain and a biofilm-producing methicillin-resistant Staphylococcus epidermidis strain.</title>
        <authorList>
            <person name="Gill S.R."/>
            <person name="Fouts D.E."/>
            <person name="Archer G.L."/>
            <person name="Mongodin E.F."/>
            <person name="DeBoy R.T."/>
            <person name="Ravel J."/>
            <person name="Paulsen I.T."/>
            <person name="Kolonay J.F."/>
            <person name="Brinkac L.M."/>
            <person name="Beanan M.J."/>
            <person name="Dodson R.J."/>
            <person name="Daugherty S.C."/>
            <person name="Madupu R."/>
            <person name="Angiuoli S.V."/>
            <person name="Durkin A.S."/>
            <person name="Haft D.H."/>
            <person name="Vamathevan J.J."/>
            <person name="Khouri H."/>
            <person name="Utterback T.R."/>
            <person name="Lee C."/>
            <person name="Dimitrov G."/>
            <person name="Jiang L."/>
            <person name="Qin H."/>
            <person name="Weidman J."/>
            <person name="Tran K."/>
            <person name="Kang K.H."/>
            <person name="Hance I.R."/>
            <person name="Nelson K.E."/>
            <person name="Fraser C.M."/>
        </authorList>
    </citation>
    <scope>NUCLEOTIDE SEQUENCE [LARGE SCALE GENOMIC DNA]</scope>
    <source>
        <strain>ATCC 35984 / DSM 28319 / BCRC 17069 / CCUG 31568 / BM 3577 / RP62A</strain>
    </source>
</reference>
<protein>
    <recommendedName>
        <fullName evidence="1">PTS system lactose-specific EIIA component</fullName>
    </recommendedName>
    <alternativeName>
        <fullName evidence="1">EIIA-Lac</fullName>
    </alternativeName>
    <alternativeName>
        <fullName evidence="1">EIII-Lac</fullName>
    </alternativeName>
    <alternativeName>
        <fullName evidence="1">Lactose-specific phosphotransferase enzyme IIA component</fullName>
    </alternativeName>
</protein>
<feature type="chain" id="PRO_0000186606" description="PTS system lactose-specific EIIA component">
    <location>
        <begin position="1"/>
        <end position="104"/>
    </location>
</feature>
<feature type="domain" description="PTS EIIA type-3" evidence="3">
    <location>
        <begin position="1"/>
        <end position="102"/>
    </location>
</feature>
<feature type="active site" description="Tele-phosphohistidine intermediate" evidence="1">
    <location>
        <position position="78"/>
    </location>
</feature>
<feature type="binding site" evidence="2">
    <location>
        <position position="81"/>
    </location>
    <ligand>
        <name>Mg(2+)</name>
        <dbReference type="ChEBI" id="CHEBI:18420"/>
        <note>ligand shared between all trimeric partners</note>
    </ligand>
</feature>
<feature type="modified residue" description="Phosphohistidine; by HPr" evidence="1 3">
    <location>
        <position position="78"/>
    </location>
</feature>
<evidence type="ECO:0000250" key="1">
    <source>
        <dbReference type="UniProtKB" id="P0A0D6"/>
    </source>
</evidence>
<evidence type="ECO:0000250" key="2">
    <source>
        <dbReference type="UniProtKB" id="P23532"/>
    </source>
</evidence>
<evidence type="ECO:0000255" key="3">
    <source>
        <dbReference type="PROSITE-ProRule" id="PRU00418"/>
    </source>
</evidence>
<evidence type="ECO:0000305" key="4"/>
<keyword id="KW-0963">Cytoplasm</keyword>
<keyword id="KW-0460">Magnesium</keyword>
<keyword id="KW-0479">Metal-binding</keyword>
<keyword id="KW-0597">Phosphoprotein</keyword>
<keyword id="KW-0598">Phosphotransferase system</keyword>
<keyword id="KW-1185">Reference proteome</keyword>
<keyword id="KW-0762">Sugar transport</keyword>
<keyword id="KW-0808">Transferase</keyword>
<keyword id="KW-0813">Transport</keyword>
<name>PTLA_STAEQ</name>
<gene>
    <name evidence="1" type="primary">lacF</name>
    <name type="ordered locus">SERP1791</name>
</gene>